<gene>
    <name evidence="2" type="primary">hda</name>
    <name type="ordered locus">ECS88_2667</name>
</gene>
<name>HDA_ECO45</name>
<organism>
    <name type="scientific">Escherichia coli O45:K1 (strain S88 / ExPEC)</name>
    <dbReference type="NCBI Taxonomy" id="585035"/>
    <lineage>
        <taxon>Bacteria</taxon>
        <taxon>Pseudomonadati</taxon>
        <taxon>Pseudomonadota</taxon>
        <taxon>Gammaproteobacteria</taxon>
        <taxon>Enterobacterales</taxon>
        <taxon>Enterobacteriaceae</taxon>
        <taxon>Escherichia</taxon>
    </lineage>
</organism>
<dbReference type="EMBL" id="CU928161">
    <property type="protein sequence ID" value="CAR03935.1"/>
    <property type="status" value="ALT_INIT"/>
    <property type="molecule type" value="Genomic_DNA"/>
</dbReference>
<dbReference type="RefSeq" id="WP_001307333.1">
    <property type="nucleotide sequence ID" value="NC_011742.1"/>
</dbReference>
<dbReference type="SMR" id="B7MHX7"/>
<dbReference type="KEGG" id="ecz:ECS88_2667"/>
<dbReference type="HOGENOM" id="CLU_072265_1_1_6"/>
<dbReference type="Proteomes" id="UP000000747">
    <property type="component" value="Chromosome"/>
</dbReference>
<dbReference type="GO" id="GO:0006270">
    <property type="term" value="P:DNA replication initiation"/>
    <property type="evidence" value="ECO:0007669"/>
    <property type="project" value="TreeGrafter"/>
</dbReference>
<dbReference type="GO" id="GO:0032297">
    <property type="term" value="P:negative regulation of DNA-templated DNA replication initiation"/>
    <property type="evidence" value="ECO:0007669"/>
    <property type="project" value="InterPro"/>
</dbReference>
<dbReference type="FunFam" id="1.10.8.60:FF:000024">
    <property type="entry name" value="DnaA regulatory inactivator Hda"/>
    <property type="match status" value="1"/>
</dbReference>
<dbReference type="FunFam" id="3.40.50.300:FF:000452">
    <property type="entry name" value="DnaA regulatory inactivator Hda"/>
    <property type="match status" value="1"/>
</dbReference>
<dbReference type="Gene3D" id="1.10.8.60">
    <property type="match status" value="1"/>
</dbReference>
<dbReference type="Gene3D" id="3.40.50.300">
    <property type="entry name" value="P-loop containing nucleotide triphosphate hydrolases"/>
    <property type="match status" value="1"/>
</dbReference>
<dbReference type="HAMAP" id="MF_01158">
    <property type="entry name" value="Hda"/>
    <property type="match status" value="1"/>
</dbReference>
<dbReference type="InterPro" id="IPR020591">
    <property type="entry name" value="Chromosome_initiator_DnaA-like"/>
</dbReference>
<dbReference type="InterPro" id="IPR013317">
    <property type="entry name" value="DnaA_dom"/>
</dbReference>
<dbReference type="InterPro" id="IPR017788">
    <property type="entry name" value="Hda"/>
</dbReference>
<dbReference type="InterPro" id="IPR022864">
    <property type="entry name" value="Hda_Enterobact"/>
</dbReference>
<dbReference type="InterPro" id="IPR055199">
    <property type="entry name" value="Hda_lid"/>
</dbReference>
<dbReference type="InterPro" id="IPR027417">
    <property type="entry name" value="P-loop_NTPase"/>
</dbReference>
<dbReference type="NCBIfam" id="TIGR03420">
    <property type="entry name" value="DnaA_homol_Hda"/>
    <property type="match status" value="1"/>
</dbReference>
<dbReference type="NCBIfam" id="NF005982">
    <property type="entry name" value="PRK08084.1"/>
    <property type="match status" value="1"/>
</dbReference>
<dbReference type="PANTHER" id="PTHR30050">
    <property type="entry name" value="CHROMOSOMAL REPLICATION INITIATOR PROTEIN DNAA"/>
    <property type="match status" value="1"/>
</dbReference>
<dbReference type="PANTHER" id="PTHR30050:SF5">
    <property type="entry name" value="DNAA REGULATORY INACTIVATOR HDA"/>
    <property type="match status" value="1"/>
</dbReference>
<dbReference type="Pfam" id="PF00308">
    <property type="entry name" value="Bac_DnaA"/>
    <property type="match status" value="1"/>
</dbReference>
<dbReference type="Pfam" id="PF22688">
    <property type="entry name" value="Hda_lid"/>
    <property type="match status" value="1"/>
</dbReference>
<dbReference type="PRINTS" id="PR00051">
    <property type="entry name" value="DNAA"/>
</dbReference>
<dbReference type="SUPFAM" id="SSF52540">
    <property type="entry name" value="P-loop containing nucleoside triphosphate hydrolases"/>
    <property type="match status" value="1"/>
</dbReference>
<accession>B7MHX7</accession>
<comment type="function">
    <text evidence="1">Mediates the interaction of DNA replication initiator protein DnaA with DNA polymerase subunit beta sliding clamp (dnaN). Stimulates hydrolysis of ATP-DnaA to ADP-DnaA, rendering DnaA inactive for reinitiation, a process called regulatory inhibition of DnaA or RIDA (By similarity).</text>
</comment>
<comment type="subunit">
    <text evidence="2">The active form seems to be an ADP-bound monomer. Forms the RIDA complex (regulatory inactivation of DnaA) of ATP-DnaA, ADP-Hda and the DNA-loaded beta sliding clamp (dnaN).</text>
</comment>
<comment type="similarity">
    <text evidence="2">Belongs to the DnaA family. HdA subfamily.</text>
</comment>
<comment type="sequence caution" evidence="3">
    <conflict type="erroneous initiation">
        <sequence resource="EMBL-CDS" id="CAR03935"/>
    </conflict>
</comment>
<feature type="chain" id="PRO_1000137807" description="DnaA regulatory inactivator Hda">
    <location>
        <begin position="1"/>
        <end position="233"/>
    </location>
</feature>
<protein>
    <recommendedName>
        <fullName evidence="2">DnaA regulatory inactivator Hda</fullName>
    </recommendedName>
</protein>
<evidence type="ECO:0000250" key="1"/>
<evidence type="ECO:0000255" key="2">
    <source>
        <dbReference type="HAMAP-Rule" id="MF_01158"/>
    </source>
</evidence>
<evidence type="ECO:0000305" key="3"/>
<keyword id="KW-0235">DNA replication</keyword>
<keyword id="KW-0236">DNA replication inhibitor</keyword>
<keyword id="KW-1185">Reference proteome</keyword>
<proteinExistence type="inferred from homology"/>
<reference key="1">
    <citation type="journal article" date="2009" name="PLoS Genet.">
        <title>Organised genome dynamics in the Escherichia coli species results in highly diverse adaptive paths.</title>
        <authorList>
            <person name="Touchon M."/>
            <person name="Hoede C."/>
            <person name="Tenaillon O."/>
            <person name="Barbe V."/>
            <person name="Baeriswyl S."/>
            <person name="Bidet P."/>
            <person name="Bingen E."/>
            <person name="Bonacorsi S."/>
            <person name="Bouchier C."/>
            <person name="Bouvet O."/>
            <person name="Calteau A."/>
            <person name="Chiapello H."/>
            <person name="Clermont O."/>
            <person name="Cruveiller S."/>
            <person name="Danchin A."/>
            <person name="Diard M."/>
            <person name="Dossat C."/>
            <person name="Karoui M.E."/>
            <person name="Frapy E."/>
            <person name="Garry L."/>
            <person name="Ghigo J.M."/>
            <person name="Gilles A.M."/>
            <person name="Johnson J."/>
            <person name="Le Bouguenec C."/>
            <person name="Lescat M."/>
            <person name="Mangenot S."/>
            <person name="Martinez-Jehanne V."/>
            <person name="Matic I."/>
            <person name="Nassif X."/>
            <person name="Oztas S."/>
            <person name="Petit M.A."/>
            <person name="Pichon C."/>
            <person name="Rouy Z."/>
            <person name="Ruf C.S."/>
            <person name="Schneider D."/>
            <person name="Tourret J."/>
            <person name="Vacherie B."/>
            <person name="Vallenet D."/>
            <person name="Medigue C."/>
            <person name="Rocha E.P.C."/>
            <person name="Denamur E."/>
        </authorList>
    </citation>
    <scope>NUCLEOTIDE SEQUENCE [LARGE SCALE GENOMIC DNA]</scope>
    <source>
        <strain>S88 / ExPEC</strain>
    </source>
</reference>
<sequence length="233" mass="26633">MNTPAQLSLPLYLPDDETFASFWPGDNSSLLAALQNVLRQEHSGYIYLWAREGAGRSHLLHAACAELSQRGDAVGYVPLDKRTWFVPEVLDGMEHLSLVCIDNIECIAGDELWEMAIFDLYNRILESGKTRLLITGDRPPRQLNLGLPDLASRLDWGQIYKLQPLSDEDKLQALQLRARLRGFELPEDVGRFLLKRLDREMRTLFMTLDQLDRASITAQRKLTIPFVKEILKL</sequence>